<reference key="1">
    <citation type="journal article" date="2008" name="PLoS ONE">
        <title>Genetic basis of virulence attenuation revealed by comparative genomic analysis of Mycobacterium tuberculosis strain H37Ra versus H37Rv.</title>
        <authorList>
            <person name="Zheng H."/>
            <person name="Lu L."/>
            <person name="Wang B."/>
            <person name="Pu S."/>
            <person name="Zhang X."/>
            <person name="Zhu G."/>
            <person name="Shi W."/>
            <person name="Zhang L."/>
            <person name="Wang H."/>
            <person name="Wang S."/>
            <person name="Zhao G."/>
            <person name="Zhang Y."/>
        </authorList>
    </citation>
    <scope>NUCLEOTIDE SEQUENCE [LARGE SCALE GENOMIC DNA]</scope>
    <source>
        <strain>ATCC 25177 / H37Ra</strain>
    </source>
</reference>
<feature type="chain" id="PRO_1000011323" description="Probable endonuclease 4">
    <location>
        <begin position="1"/>
        <end position="252"/>
    </location>
</feature>
<feature type="binding site" evidence="1">
    <location>
        <position position="56"/>
    </location>
    <ligand>
        <name>Zn(2+)</name>
        <dbReference type="ChEBI" id="CHEBI:29105"/>
        <label>1</label>
    </ligand>
</feature>
<feature type="binding site" evidence="1">
    <location>
        <position position="96"/>
    </location>
    <ligand>
        <name>Zn(2+)</name>
        <dbReference type="ChEBI" id="CHEBI:29105"/>
        <label>1</label>
    </ligand>
</feature>
<feature type="binding site" evidence="1">
    <location>
        <position position="129"/>
    </location>
    <ligand>
        <name>Zn(2+)</name>
        <dbReference type="ChEBI" id="CHEBI:29105"/>
        <label>1</label>
    </ligand>
</feature>
<feature type="binding site" evidence="1">
    <location>
        <position position="129"/>
    </location>
    <ligand>
        <name>Zn(2+)</name>
        <dbReference type="ChEBI" id="CHEBI:29105"/>
        <label>2</label>
    </ligand>
</feature>
<feature type="binding site" evidence="1">
    <location>
        <position position="162"/>
    </location>
    <ligand>
        <name>Zn(2+)</name>
        <dbReference type="ChEBI" id="CHEBI:29105"/>
        <label>2</label>
    </ligand>
</feature>
<feature type="binding site" evidence="1">
    <location>
        <position position="165"/>
    </location>
    <ligand>
        <name>Zn(2+)</name>
        <dbReference type="ChEBI" id="CHEBI:29105"/>
        <label>3</label>
    </ligand>
</feature>
<feature type="binding site" evidence="1">
    <location>
        <position position="191"/>
    </location>
    <ligand>
        <name>Zn(2+)</name>
        <dbReference type="ChEBI" id="CHEBI:29105"/>
        <label>2</label>
    </ligand>
</feature>
<feature type="binding site" evidence="1">
    <location>
        <position position="204"/>
    </location>
    <ligand>
        <name>Zn(2+)</name>
        <dbReference type="ChEBI" id="CHEBI:29105"/>
        <label>3</label>
    </ligand>
</feature>
<feature type="binding site" evidence="1">
    <location>
        <position position="206"/>
    </location>
    <ligand>
        <name>Zn(2+)</name>
        <dbReference type="ChEBI" id="CHEBI:29105"/>
        <label>3</label>
    </ligand>
</feature>
<feature type="binding site" evidence="1">
    <location>
        <position position="233"/>
    </location>
    <ligand>
        <name>Zn(2+)</name>
        <dbReference type="ChEBI" id="CHEBI:29105"/>
        <label>2</label>
    </ligand>
</feature>
<evidence type="ECO:0000255" key="1">
    <source>
        <dbReference type="HAMAP-Rule" id="MF_00152"/>
    </source>
</evidence>
<comment type="function">
    <text evidence="1">Endonuclease IV plays a role in DNA repair. It cleaves phosphodiester bonds at apurinic or apyrimidinic (AP) sites, generating a 3'-hydroxyl group and a 5'-terminal sugar phosphate.</text>
</comment>
<comment type="catalytic activity">
    <reaction evidence="1">
        <text>Endonucleolytic cleavage to 5'-phosphooligonucleotide end-products.</text>
        <dbReference type="EC" id="3.1.21.2"/>
    </reaction>
</comment>
<comment type="cofactor">
    <cofactor evidence="1">
        <name>Zn(2+)</name>
        <dbReference type="ChEBI" id="CHEBI:29105"/>
    </cofactor>
    <text evidence="1">Binds 3 Zn(2+) ions.</text>
</comment>
<comment type="similarity">
    <text evidence="1">Belongs to the AP endonuclease 2 family.</text>
</comment>
<accession>A5U056</accession>
<sequence length="252" mass="26845">MLIGSHVSPTDPLAAAEAEGADVVQIFLGNPQSWKAPKPRDDAAALKAATLPIYVHAPYLINLASANNRVRIPSRKILQETCAAAADIGAAAVIVHGGHVADDNDIDKGFQRWRKALDRLETEVPVYLENTAGGDHAMARRFDTIARLWDVIGDTGIGFCLDTCHTWAAGEALTDAVDRIKAITGRIDLVHCNDSRDEAGSGRDRHANLGSGQIDPDLLVAAVKAAGAPVICETADQGRKDDIAFLRERTGS</sequence>
<protein>
    <recommendedName>
        <fullName evidence="1">Probable endonuclease 4</fullName>
        <ecNumber evidence="1">3.1.21.2</ecNumber>
    </recommendedName>
    <alternativeName>
        <fullName evidence="1">Endodeoxyribonuclease IV</fullName>
    </alternativeName>
    <alternativeName>
        <fullName evidence="1">Endonuclease IV</fullName>
    </alternativeName>
</protein>
<proteinExistence type="inferred from homology"/>
<keyword id="KW-0227">DNA damage</keyword>
<keyword id="KW-0234">DNA repair</keyword>
<keyword id="KW-0255">Endonuclease</keyword>
<keyword id="KW-0378">Hydrolase</keyword>
<keyword id="KW-0479">Metal-binding</keyword>
<keyword id="KW-0540">Nuclease</keyword>
<keyword id="KW-1185">Reference proteome</keyword>
<keyword id="KW-0862">Zinc</keyword>
<name>END4_MYCTA</name>
<dbReference type="EC" id="3.1.21.2" evidence="1"/>
<dbReference type="EMBL" id="CP000611">
    <property type="protein sequence ID" value="ABQ72406.1"/>
    <property type="molecule type" value="Genomic_DNA"/>
</dbReference>
<dbReference type="RefSeq" id="WP_003403419.1">
    <property type="nucleotide sequence ID" value="NZ_CP016972.1"/>
</dbReference>
<dbReference type="SMR" id="A5U056"/>
<dbReference type="KEGG" id="mra:MRA_0680"/>
<dbReference type="eggNOG" id="COG0648">
    <property type="taxonomic scope" value="Bacteria"/>
</dbReference>
<dbReference type="HOGENOM" id="CLU_025885_0_2_11"/>
<dbReference type="Proteomes" id="UP000001988">
    <property type="component" value="Chromosome"/>
</dbReference>
<dbReference type="GO" id="GO:0008833">
    <property type="term" value="F:deoxyribonuclease IV (phage-T4-induced) activity"/>
    <property type="evidence" value="ECO:0007669"/>
    <property type="project" value="UniProtKB-UniRule"/>
</dbReference>
<dbReference type="GO" id="GO:0003677">
    <property type="term" value="F:DNA binding"/>
    <property type="evidence" value="ECO:0007669"/>
    <property type="project" value="InterPro"/>
</dbReference>
<dbReference type="GO" id="GO:0003906">
    <property type="term" value="F:DNA-(apurinic or apyrimidinic site) endonuclease activity"/>
    <property type="evidence" value="ECO:0007669"/>
    <property type="project" value="TreeGrafter"/>
</dbReference>
<dbReference type="GO" id="GO:0008081">
    <property type="term" value="F:phosphoric diester hydrolase activity"/>
    <property type="evidence" value="ECO:0007669"/>
    <property type="project" value="TreeGrafter"/>
</dbReference>
<dbReference type="GO" id="GO:0008270">
    <property type="term" value="F:zinc ion binding"/>
    <property type="evidence" value="ECO:0007669"/>
    <property type="project" value="UniProtKB-UniRule"/>
</dbReference>
<dbReference type="GO" id="GO:0006284">
    <property type="term" value="P:base-excision repair"/>
    <property type="evidence" value="ECO:0007669"/>
    <property type="project" value="TreeGrafter"/>
</dbReference>
<dbReference type="CDD" id="cd00019">
    <property type="entry name" value="AP2Ec"/>
    <property type="match status" value="1"/>
</dbReference>
<dbReference type="FunFam" id="3.20.20.150:FF:000019">
    <property type="entry name" value="Probable endonuclease 4"/>
    <property type="match status" value="1"/>
</dbReference>
<dbReference type="Gene3D" id="3.20.20.150">
    <property type="entry name" value="Divalent-metal-dependent TIM barrel enzymes"/>
    <property type="match status" value="1"/>
</dbReference>
<dbReference type="HAMAP" id="MF_00152">
    <property type="entry name" value="Nfo"/>
    <property type="match status" value="1"/>
</dbReference>
<dbReference type="InterPro" id="IPR001719">
    <property type="entry name" value="AP_endonuc_2"/>
</dbReference>
<dbReference type="InterPro" id="IPR018246">
    <property type="entry name" value="AP_endonuc_F2_Zn_BS"/>
</dbReference>
<dbReference type="InterPro" id="IPR036237">
    <property type="entry name" value="Xyl_isomerase-like_sf"/>
</dbReference>
<dbReference type="InterPro" id="IPR013022">
    <property type="entry name" value="Xyl_isomerase-like_TIM-brl"/>
</dbReference>
<dbReference type="NCBIfam" id="NF002198">
    <property type="entry name" value="PRK01060.1-3"/>
    <property type="match status" value="1"/>
</dbReference>
<dbReference type="PANTHER" id="PTHR21445:SF0">
    <property type="entry name" value="APURINIC-APYRIMIDINIC ENDONUCLEASE"/>
    <property type="match status" value="1"/>
</dbReference>
<dbReference type="PANTHER" id="PTHR21445">
    <property type="entry name" value="ENDONUCLEASE IV ENDODEOXYRIBONUCLEASE IV"/>
    <property type="match status" value="1"/>
</dbReference>
<dbReference type="Pfam" id="PF01261">
    <property type="entry name" value="AP_endonuc_2"/>
    <property type="match status" value="1"/>
</dbReference>
<dbReference type="SMART" id="SM00518">
    <property type="entry name" value="AP2Ec"/>
    <property type="match status" value="1"/>
</dbReference>
<dbReference type="SUPFAM" id="SSF51658">
    <property type="entry name" value="Xylose isomerase-like"/>
    <property type="match status" value="1"/>
</dbReference>
<dbReference type="PROSITE" id="PS00729">
    <property type="entry name" value="AP_NUCLEASE_F2_1"/>
    <property type="match status" value="1"/>
</dbReference>
<dbReference type="PROSITE" id="PS00730">
    <property type="entry name" value="AP_NUCLEASE_F2_2"/>
    <property type="match status" value="1"/>
</dbReference>
<dbReference type="PROSITE" id="PS00731">
    <property type="entry name" value="AP_NUCLEASE_F2_3"/>
    <property type="match status" value="1"/>
</dbReference>
<dbReference type="PROSITE" id="PS51432">
    <property type="entry name" value="AP_NUCLEASE_F2_4"/>
    <property type="match status" value="1"/>
</dbReference>
<gene>
    <name evidence="1" type="primary">nfo</name>
    <name type="ordered locus">MRA_0680</name>
</gene>
<organism>
    <name type="scientific">Mycobacterium tuberculosis (strain ATCC 25177 / H37Ra)</name>
    <dbReference type="NCBI Taxonomy" id="419947"/>
    <lineage>
        <taxon>Bacteria</taxon>
        <taxon>Bacillati</taxon>
        <taxon>Actinomycetota</taxon>
        <taxon>Actinomycetes</taxon>
        <taxon>Mycobacteriales</taxon>
        <taxon>Mycobacteriaceae</taxon>
        <taxon>Mycobacterium</taxon>
        <taxon>Mycobacterium tuberculosis complex</taxon>
    </lineage>
</organism>